<dbReference type="EMBL" id="D45239">
    <property type="protein sequence ID" value="BAA19931.1"/>
    <property type="molecule type" value="mRNA"/>
</dbReference>
<dbReference type="RefSeq" id="NP_001075675.1">
    <property type="nucleotide sequence ID" value="NM_001082206.1"/>
</dbReference>
<dbReference type="BMRB" id="O02748"/>
<dbReference type="SMR" id="O02748"/>
<dbReference type="FunCoup" id="O02748">
    <property type="interactions" value="2319"/>
</dbReference>
<dbReference type="STRING" id="9986.ENSOCUP00000037075"/>
<dbReference type="PaxDb" id="9986-ENSOCUP00000011684"/>
<dbReference type="GeneID" id="100008996"/>
<dbReference type="KEGG" id="ocu:100008996"/>
<dbReference type="CTD" id="405"/>
<dbReference type="eggNOG" id="KOG3561">
    <property type="taxonomic scope" value="Eukaryota"/>
</dbReference>
<dbReference type="InParanoid" id="O02748"/>
<dbReference type="OrthoDB" id="71302at2759"/>
<dbReference type="Proteomes" id="UP000001811">
    <property type="component" value="Unplaced"/>
</dbReference>
<dbReference type="GO" id="GO:0005737">
    <property type="term" value="C:cytoplasm"/>
    <property type="evidence" value="ECO:0007669"/>
    <property type="project" value="InterPro"/>
</dbReference>
<dbReference type="GO" id="GO:0034753">
    <property type="term" value="C:nuclear aryl hydrocarbon receptor complex"/>
    <property type="evidence" value="ECO:0000250"/>
    <property type="project" value="UniProtKB"/>
</dbReference>
<dbReference type="GO" id="GO:0005634">
    <property type="term" value="C:nucleus"/>
    <property type="evidence" value="ECO:0000250"/>
    <property type="project" value="UniProtKB"/>
</dbReference>
<dbReference type="GO" id="GO:0005667">
    <property type="term" value="C:transcription regulator complex"/>
    <property type="evidence" value="ECO:0007669"/>
    <property type="project" value="InterPro"/>
</dbReference>
<dbReference type="GO" id="GO:0003700">
    <property type="term" value="F:DNA-binding transcription factor activity"/>
    <property type="evidence" value="ECO:0000250"/>
    <property type="project" value="UniProtKB"/>
</dbReference>
<dbReference type="GO" id="GO:0046982">
    <property type="term" value="F:protein heterodimerization activity"/>
    <property type="evidence" value="ECO:0000250"/>
    <property type="project" value="UniProtKB"/>
</dbReference>
<dbReference type="GO" id="GO:0042803">
    <property type="term" value="F:protein homodimerization activity"/>
    <property type="evidence" value="ECO:0000250"/>
    <property type="project" value="UniProtKB"/>
</dbReference>
<dbReference type="GO" id="GO:0043565">
    <property type="term" value="F:sequence-specific DNA binding"/>
    <property type="evidence" value="ECO:0000250"/>
    <property type="project" value="UniProtKB"/>
</dbReference>
<dbReference type="GO" id="GO:1990837">
    <property type="term" value="F:sequence-specific double-stranded DNA binding"/>
    <property type="evidence" value="ECO:0000250"/>
    <property type="project" value="UniProtKB"/>
</dbReference>
<dbReference type="GO" id="GO:0030522">
    <property type="term" value="P:intracellular receptor signaling pathway"/>
    <property type="evidence" value="ECO:0007669"/>
    <property type="project" value="GOC"/>
</dbReference>
<dbReference type="GO" id="GO:0045944">
    <property type="term" value="P:positive regulation of transcription by RNA polymerase II"/>
    <property type="evidence" value="ECO:0000250"/>
    <property type="project" value="UniProtKB"/>
</dbReference>
<dbReference type="CDD" id="cd18947">
    <property type="entry name" value="bHLH-PAS_ARNT"/>
    <property type="match status" value="1"/>
</dbReference>
<dbReference type="CDD" id="cd00130">
    <property type="entry name" value="PAS"/>
    <property type="match status" value="2"/>
</dbReference>
<dbReference type="FunFam" id="3.30.450.20:FF:000028">
    <property type="entry name" value="Aryl hydrocarbon receptor nuclear translocator 1"/>
    <property type="match status" value="1"/>
</dbReference>
<dbReference type="FunFam" id="3.30.450.20:FF:000003">
    <property type="entry name" value="Aryl hydrocarbon receptor nuclear translocator 2"/>
    <property type="match status" value="1"/>
</dbReference>
<dbReference type="FunFam" id="4.10.280.10:FF:000011">
    <property type="entry name" value="Aryl hydrocarbon receptor nuclear translocator 2"/>
    <property type="match status" value="1"/>
</dbReference>
<dbReference type="Gene3D" id="4.10.280.10">
    <property type="entry name" value="Helix-loop-helix DNA-binding domain"/>
    <property type="match status" value="1"/>
</dbReference>
<dbReference type="Gene3D" id="3.30.450.20">
    <property type="entry name" value="PAS domain"/>
    <property type="match status" value="2"/>
</dbReference>
<dbReference type="InterPro" id="IPR011598">
    <property type="entry name" value="bHLH_dom"/>
</dbReference>
<dbReference type="InterPro" id="IPR050933">
    <property type="entry name" value="Circadian_TF"/>
</dbReference>
<dbReference type="InterPro" id="IPR036638">
    <property type="entry name" value="HLH_DNA-bd_sf"/>
</dbReference>
<dbReference type="InterPro" id="IPR001067">
    <property type="entry name" value="Nuc_translocat"/>
</dbReference>
<dbReference type="InterPro" id="IPR001610">
    <property type="entry name" value="PAC"/>
</dbReference>
<dbReference type="InterPro" id="IPR000014">
    <property type="entry name" value="PAS"/>
</dbReference>
<dbReference type="InterPro" id="IPR035965">
    <property type="entry name" value="PAS-like_dom_sf"/>
</dbReference>
<dbReference type="InterPro" id="IPR013767">
    <property type="entry name" value="PAS_fold"/>
</dbReference>
<dbReference type="NCBIfam" id="TIGR00229">
    <property type="entry name" value="sensory_box"/>
    <property type="match status" value="1"/>
</dbReference>
<dbReference type="PANTHER" id="PTHR23042">
    <property type="entry name" value="CIRCADIAN PROTEIN CLOCK/ARNT/BMAL/PAS"/>
    <property type="match status" value="1"/>
</dbReference>
<dbReference type="Pfam" id="PF00010">
    <property type="entry name" value="HLH"/>
    <property type="match status" value="1"/>
</dbReference>
<dbReference type="Pfam" id="PF00989">
    <property type="entry name" value="PAS"/>
    <property type="match status" value="1"/>
</dbReference>
<dbReference type="Pfam" id="PF14598">
    <property type="entry name" value="PAS_11"/>
    <property type="match status" value="1"/>
</dbReference>
<dbReference type="PRINTS" id="PR00785">
    <property type="entry name" value="NCTRNSLOCATR"/>
</dbReference>
<dbReference type="SMART" id="SM00353">
    <property type="entry name" value="HLH"/>
    <property type="match status" value="1"/>
</dbReference>
<dbReference type="SMART" id="SM00086">
    <property type="entry name" value="PAC"/>
    <property type="match status" value="1"/>
</dbReference>
<dbReference type="SMART" id="SM00091">
    <property type="entry name" value="PAS"/>
    <property type="match status" value="2"/>
</dbReference>
<dbReference type="SUPFAM" id="SSF47459">
    <property type="entry name" value="HLH, helix-loop-helix DNA-binding domain"/>
    <property type="match status" value="1"/>
</dbReference>
<dbReference type="SUPFAM" id="SSF88633">
    <property type="entry name" value="Positive stranded ssRNA viruses"/>
    <property type="match status" value="1"/>
</dbReference>
<dbReference type="SUPFAM" id="SSF55785">
    <property type="entry name" value="PYP-like sensor domain (PAS domain)"/>
    <property type="match status" value="2"/>
</dbReference>
<dbReference type="PROSITE" id="PS50888">
    <property type="entry name" value="BHLH"/>
    <property type="match status" value="1"/>
</dbReference>
<dbReference type="PROSITE" id="PS50112">
    <property type="entry name" value="PAS"/>
    <property type="match status" value="2"/>
</dbReference>
<accession>O02748</accession>
<feature type="initiator methionine" description="Removed" evidence="2">
    <location>
        <position position="1"/>
    </location>
</feature>
<feature type="chain" id="PRO_0000127120" description="Aryl hydrocarbon receptor nuclear translocator">
    <location>
        <begin position="2"/>
        <end position="790"/>
    </location>
</feature>
<feature type="domain" description="bHLH" evidence="5">
    <location>
        <begin position="89"/>
        <end position="142"/>
    </location>
</feature>
<feature type="domain" description="PAS 1" evidence="4">
    <location>
        <begin position="161"/>
        <end position="235"/>
    </location>
</feature>
<feature type="domain" description="PAS 2" evidence="4">
    <location>
        <begin position="349"/>
        <end position="419"/>
    </location>
</feature>
<feature type="domain" description="PAC">
    <location>
        <begin position="424"/>
        <end position="467"/>
    </location>
</feature>
<feature type="region of interest" description="Disordered" evidence="6">
    <location>
        <begin position="1"/>
        <end position="98"/>
    </location>
</feature>
<feature type="region of interest" description="DNA-binding" evidence="3">
    <location>
        <begin position="88"/>
        <end position="128"/>
    </location>
</feature>
<feature type="region of interest" description="Required for heterodimer formation with EPAS1" evidence="3">
    <location>
        <begin position="112"/>
        <end position="264"/>
    </location>
</feature>
<feature type="region of interest" description="Required for heterodimer formation with HIF1A" evidence="3">
    <location>
        <begin position="112"/>
        <end position="168"/>
    </location>
</feature>
<feature type="region of interest" description="Mediates the transcription activity and dimerization of the AHR:ARNT complex" evidence="3">
    <location>
        <begin position="167"/>
        <end position="171"/>
    </location>
</feature>
<feature type="region of interest" description="Disordered" evidence="6">
    <location>
        <begin position="465"/>
        <end position="494"/>
    </location>
</feature>
<feature type="region of interest" description="Disordered" evidence="6">
    <location>
        <begin position="629"/>
        <end position="695"/>
    </location>
</feature>
<feature type="region of interest" description="Disordered" evidence="6">
    <location>
        <begin position="729"/>
        <end position="790"/>
    </location>
</feature>
<feature type="compositionally biased region" description="Polar residues" evidence="6">
    <location>
        <begin position="1"/>
        <end position="25"/>
    </location>
</feature>
<feature type="compositionally biased region" description="Basic and acidic residues" evidence="6">
    <location>
        <begin position="60"/>
        <end position="98"/>
    </location>
</feature>
<feature type="compositionally biased region" description="Polar residues" evidence="6">
    <location>
        <begin position="465"/>
        <end position="480"/>
    </location>
</feature>
<feature type="compositionally biased region" description="Polar residues" evidence="6">
    <location>
        <begin position="629"/>
        <end position="672"/>
    </location>
</feature>
<feature type="compositionally biased region" description="Low complexity" evidence="6">
    <location>
        <begin position="673"/>
        <end position="695"/>
    </location>
</feature>
<feature type="compositionally biased region" description="Polar residues" evidence="6">
    <location>
        <begin position="741"/>
        <end position="758"/>
    </location>
</feature>
<feature type="modified residue" description="N-acetylalanine" evidence="2">
    <location>
        <position position="2"/>
    </location>
</feature>
<feature type="modified residue" description="Phosphoserine" evidence="2">
    <location>
        <position position="77"/>
    </location>
</feature>
<feature type="cross-link" description="Glycyl lysine isopeptide (Lys-Gly) (interchain with G-Cter in SUMO2)" evidence="2">
    <location>
        <position position="58"/>
    </location>
</feature>
<sequence length="790" mass="86905">MAATTANPEMTSDVPSLGPNITSGNPGPAIQGGGTIVQRAVKRRPGLDFDDDGEGNSKFLRCDEDQMSNDKERFARSDDEQSSADKERLARENHSEIERRRRNKMTAYITELSDIVPTCSALARKPDKLTILRMAVSHMKSLRGTGNTSTDGSYKPSFLTDQELKHLILEAADGFLFIVSCETGRVVYVSDSVTPVLNQPQSEWFGSTLYDQVHPDDVDKLREQLSTSENALTGRILDLKTGTVKKEGQQSSMRMCMGSRRSFICRMRCGNSSVDPVSMNRLSFVRNRCRNGLGSVKDGEPHFVVVHCTGYIKAWPPAGVSLPDDDPEAGQGSKFCLVAIGRLQVTSSPNCTDMSNVCQPTEFISRHNIEGIFTFVDHRCVATVGYQPQELLGKNIVEFCHPEDQQLLRDSFQQVVKLKGQVLSVMFRFRSKNREWLWTRTSSFTFQNPYSDEIEYIICTNTNVKNSSQEPRPTLSNPIQRPQLGPTANLPLEVGSGQLAPRQQQQQTELDMVPGRDGLTNYNHSQISVQPVATTGPEHGKPLEKSDSLFAQDRDPRFSEMYSNINADQSKGISSSTVPATQQLFSQGNTFPPNPRPAENFRNSGLAPPVTIVQASASAGEMLAQISRHSNPTQGTAPTWTPSTRPGFSAQQVASQATTKSRSSQFGVGNFQSPSSFSSMSLSSTSTASSGAAAYPSLTSRGSNFAPETGQTAGQFQTRTAEGVGVWPQWQGQQPHHRSTSSEQHVQQPSTQQPNQPEVFQEMLSMLGDQSSSYNNEEFPDLTMFPSFSE</sequence>
<organism>
    <name type="scientific">Oryctolagus cuniculus</name>
    <name type="common">Rabbit</name>
    <dbReference type="NCBI Taxonomy" id="9986"/>
    <lineage>
        <taxon>Eukaryota</taxon>
        <taxon>Metazoa</taxon>
        <taxon>Chordata</taxon>
        <taxon>Craniata</taxon>
        <taxon>Vertebrata</taxon>
        <taxon>Euteleostomi</taxon>
        <taxon>Mammalia</taxon>
        <taxon>Eutheria</taxon>
        <taxon>Euarchontoglires</taxon>
        <taxon>Glires</taxon>
        <taxon>Lagomorpha</taxon>
        <taxon>Leporidae</taxon>
        <taxon>Oryctolagus</taxon>
    </lineage>
</organism>
<name>ARNT_RABIT</name>
<evidence type="ECO:0000250" key="1"/>
<evidence type="ECO:0000250" key="2">
    <source>
        <dbReference type="UniProtKB" id="P27540"/>
    </source>
</evidence>
<evidence type="ECO:0000250" key="3">
    <source>
        <dbReference type="UniProtKB" id="P53762"/>
    </source>
</evidence>
<evidence type="ECO:0000255" key="4">
    <source>
        <dbReference type="PROSITE-ProRule" id="PRU00140"/>
    </source>
</evidence>
<evidence type="ECO:0000255" key="5">
    <source>
        <dbReference type="PROSITE-ProRule" id="PRU00981"/>
    </source>
</evidence>
<evidence type="ECO:0000256" key="6">
    <source>
        <dbReference type="SAM" id="MobiDB-lite"/>
    </source>
</evidence>
<comment type="function">
    <text evidence="2 3">Required for activity of the AHR. Upon ligand binding, AHR translocates into the nucleus, where it heterodimerizes with ARNT and induces transcription by binding to xenobiotic response elements (XRE). Not required for the ligand-binding subunit to translocate from the cytosol to the nucleus after ligand binding. The complex initiates transcription of genes involved in the regulation of a variety of biological processes, including angiogenesis, hematopoiesis, drug and lipid metabolism, cell motility and immune modulation (By similarity). The heterodimer binds to core DNA sequence 5'-TACGTG-3' within the hypoxia response element (HRE) of target gene promoters and functions as a transcriptional regulator of the adaptive response to hypoxia (By similarity). The heterodimer ARNT:AHR binds to core DNA sequence 5'-TGCGTG-3' within the dioxin response element (DRE) of target gene promoters and activates their transcription (By similarity).</text>
</comment>
<comment type="subunit">
    <text evidence="1 2 3">Monomer. Homodimer only upon binding to a DNA (By similarity). Efficient DNA binding requires dimerization with another bHLH protein. Interacts with TACC3 (By similarity). Interacts with HIF1A, EPAS1, NPAS1 and NPAS3; forms a heterodimer that binds core DNA sequence 5'-TACGTG-3' within the hypoxia response element (HRE) of target gene promoters (By similarity). Forms a heterodimer with AHRR, as well as with other bHLH proteins. Interacts with NOCA7 (By similarity). Interacts with TACC3 (By similarity). Interacts with AHR; the heterodimer ARNT:AHR binds to core DNA sequence 5'-TGCGTG-3' within the dioxin response element (DRE) of target gene promoters and activates their transcription (By similarity). Interacts with SIM1 and NPAS4 (By similarity).</text>
</comment>
<comment type="subcellular location">
    <subcellularLocation>
        <location evidence="2">Nucleus</location>
    </subcellularLocation>
</comment>
<comment type="tissue specificity">
    <text>Was expressed at almost the same level in all tissues except for the heart, liver, and small intestine.</text>
</comment>
<gene>
    <name type="primary">ARNT</name>
</gene>
<keyword id="KW-0007">Acetylation</keyword>
<keyword id="KW-0010">Activator</keyword>
<keyword id="KW-0238">DNA-binding</keyword>
<keyword id="KW-1017">Isopeptide bond</keyword>
<keyword id="KW-0539">Nucleus</keyword>
<keyword id="KW-0597">Phosphoprotein</keyword>
<keyword id="KW-1185">Reference proteome</keyword>
<keyword id="KW-0677">Repeat</keyword>
<keyword id="KW-0804">Transcription</keyword>
<keyword id="KW-0805">Transcription regulation</keyword>
<keyword id="KW-0832">Ubl conjugation</keyword>
<proteinExistence type="evidence at transcript level"/>
<protein>
    <recommendedName>
        <fullName>Aryl hydrocarbon receptor nuclear translocator</fullName>
        <shortName>ARNT protein</shortName>
    </recommendedName>
    <alternativeName>
        <fullName>Dioxin receptor, nuclear translocator</fullName>
    </alternativeName>
    <alternativeName>
        <fullName>Hypoxia-inducible factor 1-beta</fullName>
        <shortName>HIF-1-beta</shortName>
        <shortName>HIF1-beta</shortName>
    </alternativeName>
</protein>
<reference key="1">
    <citation type="journal article" date="1996" name="Eur. J. Biochem.">
        <title>Expression of aryl hydrocarbon receptor (AhR) and aryl hydrocarbon receptor nuclear translocator (Arnt) in adult rabbits known to be non-responsive to cytochrome P-450 1A1 (CYP1A1) inducers.</title>
        <authorList>
            <person name="Takahashi Y."/>
            <person name="Nakayama K."/>
            <person name="Shimojima T."/>
            <person name="Itoh S."/>
            <person name="Kamataki T."/>
        </authorList>
    </citation>
    <scope>NUCLEOTIDE SEQUENCE [MRNA]</scope>
    <source>
        <strain>New Zealand white</strain>
        <tissue>Liver</tissue>
    </source>
</reference>